<comment type="function">
    <text evidence="1">Catalyzes the amidotransfer (transamidation) of the octanoyl moiety from octanoyl-GcvH to the lipoyl domain of the E2 subunit of lipoate-dependent enzymes.</text>
</comment>
<comment type="catalytic activity">
    <reaction evidence="1">
        <text>N(6)-octanoyl-L-lysyl-[glycine-cleavage complex H protein] + L-lysyl-[lipoyl-carrier protein] = N(6)-octanoyl-L-lysyl-[lipoyl-carrier protein] + L-lysyl-[glycine-cleavage complex H protein]</text>
        <dbReference type="Rhea" id="RHEA:20213"/>
        <dbReference type="Rhea" id="RHEA-COMP:10500"/>
        <dbReference type="Rhea" id="RHEA-COMP:10501"/>
        <dbReference type="Rhea" id="RHEA-COMP:10503"/>
        <dbReference type="Rhea" id="RHEA-COMP:10504"/>
        <dbReference type="ChEBI" id="CHEBI:29969"/>
        <dbReference type="ChEBI" id="CHEBI:78809"/>
        <dbReference type="EC" id="2.3.1.204"/>
    </reaction>
</comment>
<comment type="pathway">
    <text evidence="1">Protein modification; protein lipoylation via endogenous pathway; protein N(6)-(lipoyl)lysine from octanoyl-[acyl-carrier-protein].</text>
</comment>
<comment type="miscellaneous">
    <text evidence="1">The reaction proceeds via a thioester-linked acyl-enzyme intermediate.</text>
</comment>
<comment type="similarity">
    <text evidence="1">Belongs to the octanoyltransferase LipL family.</text>
</comment>
<reference key="1">
    <citation type="journal article" date="2007" name="Nat. Biotechnol.">
        <title>Comparative analysis of the complete genome sequence of the plant growth-promoting bacterium Bacillus amyloliquefaciens FZB42.</title>
        <authorList>
            <person name="Chen X.H."/>
            <person name="Koumoutsi A."/>
            <person name="Scholz R."/>
            <person name="Eisenreich A."/>
            <person name="Schneider K."/>
            <person name="Heinemeyer I."/>
            <person name="Morgenstern B."/>
            <person name="Voss B."/>
            <person name="Hess W.R."/>
            <person name="Reva O."/>
            <person name="Junge H."/>
            <person name="Voigt B."/>
            <person name="Jungblut P.R."/>
            <person name="Vater J."/>
            <person name="Suessmuth R."/>
            <person name="Liesegang H."/>
            <person name="Strittmatter A."/>
            <person name="Gottschalk G."/>
            <person name="Borriss R."/>
        </authorList>
    </citation>
    <scope>NUCLEOTIDE SEQUENCE [LARGE SCALE GENOMIC DNA]</scope>
    <source>
        <strain>DSM 23117 / BGSC 10A6 / LMG 26770 / FZB42</strain>
    </source>
</reference>
<feature type="chain" id="PRO_0000410833" description="Octanoyl-[GcvH]:protein N-octanoyltransferase">
    <location>
        <begin position="1"/>
        <end position="287"/>
    </location>
</feature>
<feature type="domain" description="BPL/LPL catalytic" evidence="2">
    <location>
        <begin position="45"/>
        <end position="253"/>
    </location>
</feature>
<feature type="active site" description="Acyl-thioester intermediate" evidence="1">
    <location>
        <position position="150"/>
    </location>
</feature>
<feature type="site" description="Lowers pKa of active site Cys" evidence="1">
    <location>
        <position position="162"/>
    </location>
</feature>
<keyword id="KW-0012">Acyltransferase</keyword>
<keyword id="KW-0808">Transferase</keyword>
<protein>
    <recommendedName>
        <fullName evidence="1">Octanoyl-[GcvH]:protein N-octanoyltransferase</fullName>
        <ecNumber evidence="1">2.3.1.204</ecNumber>
    </recommendedName>
    <alternativeName>
        <fullName evidence="1">Octanoyl-[GcvH]:E2 amidotransferase</fullName>
    </alternativeName>
</protein>
<organism>
    <name type="scientific">Bacillus velezensis (strain DSM 23117 / BGSC 10A6 / LMG 26770 / FZB42)</name>
    <name type="common">Bacillus amyloliquefaciens subsp. plantarum</name>
    <dbReference type="NCBI Taxonomy" id="326423"/>
    <lineage>
        <taxon>Bacteria</taxon>
        <taxon>Bacillati</taxon>
        <taxon>Bacillota</taxon>
        <taxon>Bacilli</taxon>
        <taxon>Bacillales</taxon>
        <taxon>Bacillaceae</taxon>
        <taxon>Bacillus</taxon>
        <taxon>Bacillus amyloliquefaciens group</taxon>
    </lineage>
</organism>
<dbReference type="EC" id="2.3.1.204" evidence="1"/>
<dbReference type="EMBL" id="CP000560">
    <property type="protein sequence ID" value="ABS75811.1"/>
    <property type="molecule type" value="Genomic_DNA"/>
</dbReference>
<dbReference type="RefSeq" id="WP_012118702.1">
    <property type="nucleotide sequence ID" value="NC_009725.2"/>
</dbReference>
<dbReference type="SMR" id="A7Z9Y5"/>
<dbReference type="GeneID" id="93082626"/>
<dbReference type="KEGG" id="bay:RBAM_034820"/>
<dbReference type="HOGENOM" id="CLU_067270_0_0_9"/>
<dbReference type="Proteomes" id="UP000001120">
    <property type="component" value="Chromosome"/>
</dbReference>
<dbReference type="GO" id="GO:0033819">
    <property type="term" value="F:lipoyl(octanoyl) transferase activity"/>
    <property type="evidence" value="ECO:0007669"/>
    <property type="project" value="InterPro"/>
</dbReference>
<dbReference type="GO" id="GO:0009107">
    <property type="term" value="P:lipoate biosynthetic process"/>
    <property type="evidence" value="ECO:0007669"/>
    <property type="project" value="UniProtKB-UniRule"/>
</dbReference>
<dbReference type="GO" id="GO:0036211">
    <property type="term" value="P:protein modification process"/>
    <property type="evidence" value="ECO:0007669"/>
    <property type="project" value="InterPro"/>
</dbReference>
<dbReference type="CDD" id="cd16443">
    <property type="entry name" value="LplA"/>
    <property type="match status" value="1"/>
</dbReference>
<dbReference type="Gene3D" id="3.30.930.10">
    <property type="entry name" value="Bira Bifunctional Protein, Domain 2"/>
    <property type="match status" value="1"/>
</dbReference>
<dbReference type="HAMAP" id="MF_02119">
    <property type="entry name" value="LipL"/>
    <property type="match status" value="1"/>
</dbReference>
<dbReference type="InterPro" id="IPR045864">
    <property type="entry name" value="aa-tRNA-synth_II/BPL/LPL"/>
</dbReference>
<dbReference type="InterPro" id="IPR004143">
    <property type="entry name" value="BPL_LPL_catalytic"/>
</dbReference>
<dbReference type="InterPro" id="IPR024897">
    <property type="entry name" value="LipL"/>
</dbReference>
<dbReference type="InterPro" id="IPR050664">
    <property type="entry name" value="Octanoyltrans_LipM/LipL"/>
</dbReference>
<dbReference type="PANTHER" id="PTHR43679:SF2">
    <property type="entry name" value="OCTANOYL-[GCVH]:PROTEIN N-OCTANOYLTRANSFERASE"/>
    <property type="match status" value="1"/>
</dbReference>
<dbReference type="PANTHER" id="PTHR43679">
    <property type="entry name" value="OCTANOYLTRANSFERASE LIPM-RELATED"/>
    <property type="match status" value="1"/>
</dbReference>
<dbReference type="Pfam" id="PF21948">
    <property type="entry name" value="LplA-B_cat"/>
    <property type="match status" value="1"/>
</dbReference>
<dbReference type="SUPFAM" id="SSF55681">
    <property type="entry name" value="Class II aaRS and biotin synthetases"/>
    <property type="match status" value="1"/>
</dbReference>
<dbReference type="PROSITE" id="PS51733">
    <property type="entry name" value="BPL_LPL_CATALYTIC"/>
    <property type="match status" value="1"/>
</dbReference>
<evidence type="ECO:0000255" key="1">
    <source>
        <dbReference type="HAMAP-Rule" id="MF_02119"/>
    </source>
</evidence>
<evidence type="ECO:0000255" key="2">
    <source>
        <dbReference type="PROSITE-ProRule" id="PRU01067"/>
    </source>
</evidence>
<sequence length="287" mass="32170">MGKQPIDLLMQPSWRIIDQSSLGPYFDAKQSFAMDDTLCASVGKGESPATARSWVHHRTIVLGIQDTRLPFLEDGVKLLEDEGYRVIVRNSGGLAVVLDEGVLNISLIFEDEKKGIDIDRGYEAMTELVRRMLRPHHAEIEAYEIKGSYCPGSYDLSIGGRKFAGISQRRLRGGTAVQIYLCADKSGSERADLIRRFYQAALKDKSNDTKGVYPDIRPETMASLSELLRTDITVQDLMLALLTELKELSGRLYAAGLSPEEEMVFEKNLTRMLERNEKVFGTQESLD</sequence>
<gene>
    <name evidence="1" type="primary">lipL</name>
    <name type="synonym">ywfL</name>
    <name type="ordered locus">RBAM_034820</name>
</gene>
<name>LIPL_BACVZ</name>
<proteinExistence type="inferred from homology"/>
<accession>A7Z9Y5</accession>